<sequence>MIIQDVELVKVARTPGDYPPPLKGEVAFVGRSNVGKSSLLNALFNKKIAFVSKTPGKTRSINFYLVNSKYYFVDLPGYGYAKVSKKERMLWKRLVEDYFKNRWSLQMVFLLVDGRIPPQDSDFMMIEWMKSLNIPFTIVLTKMDKVKMSERAKKLEEHQKEFSRYGEYTIIPTSSVTGEGISELLDLISTLLKEN</sequence>
<gene>
    <name evidence="1" type="primary">engB</name>
    <name type="ordered locus">Tpet_1327</name>
</gene>
<comment type="function">
    <text evidence="1">Necessary for normal cell division and for the maintenance of normal septation.</text>
</comment>
<comment type="cofactor">
    <cofactor evidence="1">
        <name>Mg(2+)</name>
        <dbReference type="ChEBI" id="CHEBI:18420"/>
    </cofactor>
</comment>
<comment type="similarity">
    <text evidence="1">Belongs to the TRAFAC class TrmE-Era-EngA-EngB-Septin-like GTPase superfamily. EngB GTPase family.</text>
</comment>
<evidence type="ECO:0000255" key="1">
    <source>
        <dbReference type="HAMAP-Rule" id="MF_00321"/>
    </source>
</evidence>
<dbReference type="EMBL" id="CP000702">
    <property type="protein sequence ID" value="ABQ47341.1"/>
    <property type="molecule type" value="Genomic_DNA"/>
</dbReference>
<dbReference type="RefSeq" id="WP_011943809.1">
    <property type="nucleotide sequence ID" value="NC_009486.1"/>
</dbReference>
<dbReference type="SMR" id="A5IMB8"/>
<dbReference type="STRING" id="390874.Tpet_1327"/>
<dbReference type="KEGG" id="tpt:Tpet_1327"/>
<dbReference type="eggNOG" id="COG0218">
    <property type="taxonomic scope" value="Bacteria"/>
</dbReference>
<dbReference type="HOGENOM" id="CLU_033732_3_0_0"/>
<dbReference type="Proteomes" id="UP000006558">
    <property type="component" value="Chromosome"/>
</dbReference>
<dbReference type="GO" id="GO:0005829">
    <property type="term" value="C:cytosol"/>
    <property type="evidence" value="ECO:0007669"/>
    <property type="project" value="TreeGrafter"/>
</dbReference>
<dbReference type="GO" id="GO:0005525">
    <property type="term" value="F:GTP binding"/>
    <property type="evidence" value="ECO:0007669"/>
    <property type="project" value="UniProtKB-UniRule"/>
</dbReference>
<dbReference type="GO" id="GO:0046872">
    <property type="term" value="F:metal ion binding"/>
    <property type="evidence" value="ECO:0007669"/>
    <property type="project" value="UniProtKB-KW"/>
</dbReference>
<dbReference type="GO" id="GO:0000917">
    <property type="term" value="P:division septum assembly"/>
    <property type="evidence" value="ECO:0007669"/>
    <property type="project" value="UniProtKB-KW"/>
</dbReference>
<dbReference type="CDD" id="cd01876">
    <property type="entry name" value="YihA_EngB"/>
    <property type="match status" value="1"/>
</dbReference>
<dbReference type="FunFam" id="3.40.50.300:FF:000098">
    <property type="entry name" value="Probable GTP-binding protein EngB"/>
    <property type="match status" value="1"/>
</dbReference>
<dbReference type="Gene3D" id="3.40.50.300">
    <property type="entry name" value="P-loop containing nucleotide triphosphate hydrolases"/>
    <property type="match status" value="1"/>
</dbReference>
<dbReference type="HAMAP" id="MF_00321">
    <property type="entry name" value="GTPase_EngB"/>
    <property type="match status" value="1"/>
</dbReference>
<dbReference type="InterPro" id="IPR030393">
    <property type="entry name" value="G_ENGB_dom"/>
</dbReference>
<dbReference type="InterPro" id="IPR006073">
    <property type="entry name" value="GTP-bd"/>
</dbReference>
<dbReference type="InterPro" id="IPR019987">
    <property type="entry name" value="GTP-bd_ribosome_bio_YsxC"/>
</dbReference>
<dbReference type="InterPro" id="IPR027417">
    <property type="entry name" value="P-loop_NTPase"/>
</dbReference>
<dbReference type="InterPro" id="IPR005225">
    <property type="entry name" value="Small_GTP-bd"/>
</dbReference>
<dbReference type="NCBIfam" id="TIGR03598">
    <property type="entry name" value="GTPase_YsxC"/>
    <property type="match status" value="1"/>
</dbReference>
<dbReference type="NCBIfam" id="TIGR00231">
    <property type="entry name" value="small_GTP"/>
    <property type="match status" value="1"/>
</dbReference>
<dbReference type="PANTHER" id="PTHR11649:SF13">
    <property type="entry name" value="ENGB-TYPE G DOMAIN-CONTAINING PROTEIN"/>
    <property type="match status" value="1"/>
</dbReference>
<dbReference type="PANTHER" id="PTHR11649">
    <property type="entry name" value="MSS1/TRME-RELATED GTP-BINDING PROTEIN"/>
    <property type="match status" value="1"/>
</dbReference>
<dbReference type="Pfam" id="PF01926">
    <property type="entry name" value="MMR_HSR1"/>
    <property type="match status" value="1"/>
</dbReference>
<dbReference type="SUPFAM" id="SSF52540">
    <property type="entry name" value="P-loop containing nucleoside triphosphate hydrolases"/>
    <property type="match status" value="1"/>
</dbReference>
<dbReference type="PROSITE" id="PS51706">
    <property type="entry name" value="G_ENGB"/>
    <property type="match status" value="1"/>
</dbReference>
<feature type="chain" id="PRO_1000005865" description="Probable GTP-binding protein EngB">
    <location>
        <begin position="1"/>
        <end position="195"/>
    </location>
</feature>
<feature type="domain" description="EngB-type G" evidence="1">
    <location>
        <begin position="22"/>
        <end position="194"/>
    </location>
</feature>
<feature type="binding site" evidence="1">
    <location>
        <begin position="30"/>
        <end position="37"/>
    </location>
    <ligand>
        <name>GTP</name>
        <dbReference type="ChEBI" id="CHEBI:37565"/>
    </ligand>
</feature>
<feature type="binding site" evidence="1">
    <location>
        <position position="37"/>
    </location>
    <ligand>
        <name>Mg(2+)</name>
        <dbReference type="ChEBI" id="CHEBI:18420"/>
    </ligand>
</feature>
<feature type="binding site" evidence="1">
    <location>
        <begin position="56"/>
        <end position="60"/>
    </location>
    <ligand>
        <name>GTP</name>
        <dbReference type="ChEBI" id="CHEBI:37565"/>
    </ligand>
</feature>
<feature type="binding site" evidence="1">
    <location>
        <position position="58"/>
    </location>
    <ligand>
        <name>Mg(2+)</name>
        <dbReference type="ChEBI" id="CHEBI:18420"/>
    </ligand>
</feature>
<feature type="binding site" evidence="1">
    <location>
        <begin position="74"/>
        <end position="77"/>
    </location>
    <ligand>
        <name>GTP</name>
        <dbReference type="ChEBI" id="CHEBI:37565"/>
    </ligand>
</feature>
<feature type="binding site" evidence="1">
    <location>
        <begin position="141"/>
        <end position="144"/>
    </location>
    <ligand>
        <name>GTP</name>
        <dbReference type="ChEBI" id="CHEBI:37565"/>
    </ligand>
</feature>
<feature type="binding site" evidence="1">
    <location>
        <begin position="173"/>
        <end position="175"/>
    </location>
    <ligand>
        <name>GTP</name>
        <dbReference type="ChEBI" id="CHEBI:37565"/>
    </ligand>
</feature>
<protein>
    <recommendedName>
        <fullName evidence="1">Probable GTP-binding protein EngB</fullName>
    </recommendedName>
</protein>
<proteinExistence type="inferred from homology"/>
<reference key="1">
    <citation type="submission" date="2007-05" db="EMBL/GenBank/DDBJ databases">
        <title>Complete sequence of Thermotoga petrophila RKU-1.</title>
        <authorList>
            <consortium name="US DOE Joint Genome Institute"/>
            <person name="Copeland A."/>
            <person name="Lucas S."/>
            <person name="Lapidus A."/>
            <person name="Barry K."/>
            <person name="Glavina del Rio T."/>
            <person name="Dalin E."/>
            <person name="Tice H."/>
            <person name="Pitluck S."/>
            <person name="Sims D."/>
            <person name="Brettin T."/>
            <person name="Bruce D."/>
            <person name="Detter J.C."/>
            <person name="Han C."/>
            <person name="Tapia R."/>
            <person name="Schmutz J."/>
            <person name="Larimer F."/>
            <person name="Land M."/>
            <person name="Hauser L."/>
            <person name="Kyrpides N."/>
            <person name="Mikhailova N."/>
            <person name="Nelson K."/>
            <person name="Gogarten J.P."/>
            <person name="Noll K."/>
            <person name="Richardson P."/>
        </authorList>
    </citation>
    <scope>NUCLEOTIDE SEQUENCE [LARGE SCALE GENOMIC DNA]</scope>
    <source>
        <strain>ATCC BAA-488 / DSM 13995 / JCM 10881 / RKU-1</strain>
    </source>
</reference>
<keyword id="KW-0131">Cell cycle</keyword>
<keyword id="KW-0132">Cell division</keyword>
<keyword id="KW-0342">GTP-binding</keyword>
<keyword id="KW-0460">Magnesium</keyword>
<keyword id="KW-0479">Metal-binding</keyword>
<keyword id="KW-0547">Nucleotide-binding</keyword>
<keyword id="KW-0717">Septation</keyword>
<organism>
    <name type="scientific">Thermotoga petrophila (strain ATCC BAA-488 / DSM 13995 / JCM 10881 / RKU-1)</name>
    <dbReference type="NCBI Taxonomy" id="390874"/>
    <lineage>
        <taxon>Bacteria</taxon>
        <taxon>Thermotogati</taxon>
        <taxon>Thermotogota</taxon>
        <taxon>Thermotogae</taxon>
        <taxon>Thermotogales</taxon>
        <taxon>Thermotogaceae</taxon>
        <taxon>Thermotoga</taxon>
    </lineage>
</organism>
<name>ENGB_THEP1</name>
<accession>A5IMB8</accession>